<evidence type="ECO:0000255" key="1">
    <source>
        <dbReference type="HAMAP-Rule" id="MF_00059"/>
    </source>
</evidence>
<protein>
    <recommendedName>
        <fullName evidence="1">DNA-directed RNA polymerase subunit alpha</fullName>
        <shortName evidence="1">PEP</shortName>
        <ecNumber evidence="1">2.7.7.6</ecNumber>
    </recommendedName>
    <alternativeName>
        <fullName evidence="1">Plastid-encoded RNA polymerase subunit alpha</fullName>
        <shortName evidence="1">RNA polymerase subunit alpha</shortName>
    </alternativeName>
</protein>
<dbReference type="EC" id="2.7.7.6" evidence="1"/>
<dbReference type="EMBL" id="X15645">
    <property type="protein sequence ID" value="CAA33668.1"/>
    <property type="molecule type" value="Genomic_DNA"/>
</dbReference>
<dbReference type="PIR" id="S04384">
    <property type="entry name" value="S04384"/>
</dbReference>
<dbReference type="RefSeq" id="YP_003587583.1">
    <property type="nucleotide sequence ID" value="NC_014057.1"/>
</dbReference>
<dbReference type="SMR" id="P13911"/>
<dbReference type="GeneID" id="9073138"/>
<dbReference type="GO" id="GO:0009507">
    <property type="term" value="C:chloroplast"/>
    <property type="evidence" value="ECO:0007669"/>
    <property type="project" value="UniProtKB-SubCell"/>
</dbReference>
<dbReference type="GO" id="GO:0000428">
    <property type="term" value="C:DNA-directed RNA polymerase complex"/>
    <property type="evidence" value="ECO:0007669"/>
    <property type="project" value="UniProtKB-KW"/>
</dbReference>
<dbReference type="GO" id="GO:0005739">
    <property type="term" value="C:mitochondrion"/>
    <property type="evidence" value="ECO:0007669"/>
    <property type="project" value="GOC"/>
</dbReference>
<dbReference type="GO" id="GO:0003677">
    <property type="term" value="F:DNA binding"/>
    <property type="evidence" value="ECO:0007669"/>
    <property type="project" value="UniProtKB-UniRule"/>
</dbReference>
<dbReference type="GO" id="GO:0003899">
    <property type="term" value="F:DNA-directed RNA polymerase activity"/>
    <property type="evidence" value="ECO:0007669"/>
    <property type="project" value="UniProtKB-UniRule"/>
</dbReference>
<dbReference type="GO" id="GO:0046983">
    <property type="term" value="F:protein dimerization activity"/>
    <property type="evidence" value="ECO:0007669"/>
    <property type="project" value="InterPro"/>
</dbReference>
<dbReference type="GO" id="GO:0006351">
    <property type="term" value="P:DNA-templated transcription"/>
    <property type="evidence" value="ECO:0007669"/>
    <property type="project" value="UniProtKB-UniRule"/>
</dbReference>
<dbReference type="CDD" id="cd06928">
    <property type="entry name" value="RNAP_alpha_NTD"/>
    <property type="match status" value="1"/>
</dbReference>
<dbReference type="FunFam" id="2.170.120.12:FF:000001">
    <property type="entry name" value="DNA-directed RNA polymerase subunit alpha"/>
    <property type="match status" value="1"/>
</dbReference>
<dbReference type="Gene3D" id="1.10.150.20">
    <property type="entry name" value="5' to 3' exonuclease, C-terminal subdomain"/>
    <property type="match status" value="1"/>
</dbReference>
<dbReference type="Gene3D" id="2.170.120.12">
    <property type="entry name" value="DNA-directed RNA polymerase, insert domain"/>
    <property type="match status" value="1"/>
</dbReference>
<dbReference type="Gene3D" id="3.30.1360.10">
    <property type="entry name" value="RNA polymerase, RBP11-like subunit"/>
    <property type="match status" value="1"/>
</dbReference>
<dbReference type="HAMAP" id="MF_00059">
    <property type="entry name" value="RNApol_bact_RpoA"/>
    <property type="match status" value="1"/>
</dbReference>
<dbReference type="InterPro" id="IPR011262">
    <property type="entry name" value="DNA-dir_RNA_pol_insert"/>
</dbReference>
<dbReference type="InterPro" id="IPR011263">
    <property type="entry name" value="DNA-dir_RNA_pol_RpoA/D/Rpb3"/>
</dbReference>
<dbReference type="InterPro" id="IPR011773">
    <property type="entry name" value="DNA-dir_RpoA"/>
</dbReference>
<dbReference type="InterPro" id="IPR036603">
    <property type="entry name" value="RBP11-like"/>
</dbReference>
<dbReference type="InterPro" id="IPR011260">
    <property type="entry name" value="RNAP_asu_C"/>
</dbReference>
<dbReference type="InterPro" id="IPR036643">
    <property type="entry name" value="RNApol_insert_sf"/>
</dbReference>
<dbReference type="NCBIfam" id="TIGR02027">
    <property type="entry name" value="rpoA"/>
    <property type="match status" value="1"/>
</dbReference>
<dbReference type="Pfam" id="PF01000">
    <property type="entry name" value="RNA_pol_A_bac"/>
    <property type="match status" value="1"/>
</dbReference>
<dbReference type="Pfam" id="PF03118">
    <property type="entry name" value="RNA_pol_A_CTD"/>
    <property type="match status" value="1"/>
</dbReference>
<dbReference type="Pfam" id="PF01193">
    <property type="entry name" value="RNA_pol_L"/>
    <property type="match status" value="1"/>
</dbReference>
<dbReference type="SMART" id="SM00662">
    <property type="entry name" value="RPOLD"/>
    <property type="match status" value="1"/>
</dbReference>
<dbReference type="SUPFAM" id="SSF47789">
    <property type="entry name" value="C-terminal domain of RNA polymerase alpha subunit"/>
    <property type="match status" value="1"/>
</dbReference>
<dbReference type="SUPFAM" id="SSF56553">
    <property type="entry name" value="Insert subdomain of RNA polymerase alpha subunit"/>
    <property type="match status" value="1"/>
</dbReference>
<dbReference type="SUPFAM" id="SSF55257">
    <property type="entry name" value="RBP11-like subunits of RNA polymerase"/>
    <property type="match status" value="1"/>
</dbReference>
<comment type="function">
    <text evidence="1">DNA-dependent RNA polymerase catalyzes the transcription of DNA into RNA using the four ribonucleoside triphosphates as substrates.</text>
</comment>
<comment type="catalytic activity">
    <reaction evidence="1">
        <text>RNA(n) + a ribonucleoside 5'-triphosphate = RNA(n+1) + diphosphate</text>
        <dbReference type="Rhea" id="RHEA:21248"/>
        <dbReference type="Rhea" id="RHEA-COMP:14527"/>
        <dbReference type="Rhea" id="RHEA-COMP:17342"/>
        <dbReference type="ChEBI" id="CHEBI:33019"/>
        <dbReference type="ChEBI" id="CHEBI:61557"/>
        <dbReference type="ChEBI" id="CHEBI:140395"/>
        <dbReference type="EC" id="2.7.7.6"/>
    </reaction>
</comment>
<comment type="subunit">
    <text evidence="1">In plastids the minimal PEP RNA polymerase catalytic core is composed of four subunits: alpha, beta, beta', and beta''. When a (nuclear-encoded) sigma factor is associated with the core the holoenzyme is formed, which can initiate transcription.</text>
</comment>
<comment type="subcellular location">
    <subcellularLocation>
        <location>Plastid</location>
        <location>Chloroplast</location>
    </subcellularLocation>
</comment>
<comment type="domain">
    <text evidence="1">The N-terminal domain is essential for RNAP assembly and basal transcription, whereas the C-terminal domain is involved in interaction with transcriptional regulators and with upstream promoter elements.</text>
</comment>
<comment type="similarity">
    <text evidence="1">Belongs to the RNA polymerase alpha chain family.</text>
</comment>
<gene>
    <name evidence="1" type="primary">rpoA</name>
</gene>
<accession>P13911</accession>
<organism>
    <name type="scientific">Pisum sativum</name>
    <name type="common">Garden pea</name>
    <name type="synonym">Lathyrus oleraceus</name>
    <dbReference type="NCBI Taxonomy" id="3888"/>
    <lineage>
        <taxon>Eukaryota</taxon>
        <taxon>Viridiplantae</taxon>
        <taxon>Streptophyta</taxon>
        <taxon>Embryophyta</taxon>
        <taxon>Tracheophyta</taxon>
        <taxon>Spermatophyta</taxon>
        <taxon>Magnoliopsida</taxon>
        <taxon>eudicotyledons</taxon>
        <taxon>Gunneridae</taxon>
        <taxon>Pentapetalae</taxon>
        <taxon>rosids</taxon>
        <taxon>fabids</taxon>
        <taxon>Fabales</taxon>
        <taxon>Fabaceae</taxon>
        <taxon>Papilionoideae</taxon>
        <taxon>50 kb inversion clade</taxon>
        <taxon>NPAAA clade</taxon>
        <taxon>Hologalegina</taxon>
        <taxon>IRL clade</taxon>
        <taxon>Fabeae</taxon>
        <taxon>Pisum</taxon>
    </lineage>
</organism>
<sequence>MIREKLKVSTQTLQWKCVESRVDSKRLYYGRFILSPLMKGQADTIGITMRRILLGEIEGTCITRAKSEKIPHEYSTIVGIQESIHEILMNLKEIVLRSNLYGTREASICFKGPGYVTAQDIILPSVEVIDNTQHIANLTEPINLCIELQIERKRGYRIKTLNNIQDGSYTIDAVFMPVRNANHSIHSYVNGNQKQEILFLEIWTNGSLTPKEALYEASRNLIDLFIPFLHAEEENLNFENNQHKMTLPLFTFHDHDRFVKDKLRKNQKEITLKSIFIDQLELPPRIYNCLKKSNIHTVLELLNKSQEDLMKIEHFRVEDLKFILNILQIENHFV</sequence>
<keyword id="KW-0150">Chloroplast</keyword>
<keyword id="KW-0240">DNA-directed RNA polymerase</keyword>
<keyword id="KW-0548">Nucleotidyltransferase</keyword>
<keyword id="KW-0934">Plastid</keyword>
<keyword id="KW-0804">Transcription</keyword>
<keyword id="KW-0808">Transferase</keyword>
<reference key="1">
    <citation type="journal article" date="1989" name="Mol. Gen. Genet.">
        <title>The plastid rpoA gene encoding a protein homologous to the bacterial RNA polymerase alpha subunit is expressed in pea chloroplasts.</title>
        <authorList>
            <person name="Purton S."/>
            <person name="Gray J.C."/>
        </authorList>
    </citation>
    <scope>NUCLEOTIDE SEQUENCE [GENOMIC DNA]</scope>
    <source>
        <strain>cv. Alaska</strain>
    </source>
</reference>
<feature type="chain" id="PRO_0000175479" description="DNA-directed RNA polymerase subunit alpha">
    <location>
        <begin position="1"/>
        <end position="334"/>
    </location>
</feature>
<feature type="region of interest" description="Alpha N-terminal domain (alpha-NTD)" evidence="1">
    <location>
        <begin position="1"/>
        <end position="232"/>
    </location>
</feature>
<feature type="region of interest" description="Alpha C-terminal domain (alpha-CTD)" evidence="1">
    <location>
        <begin position="267"/>
        <end position="334"/>
    </location>
</feature>
<proteinExistence type="inferred from homology"/>
<geneLocation type="chloroplast"/>
<name>RPOA_PEA</name>